<name>PUS4_YEAST</name>
<comment type="function">
    <text evidence="3 4">Responsible for synthesis of pseudouridine from uracil-55 in the psi GC loop of transfer RNAs (PubMed:9358157). Also catalyzes pseudouridylation of mRNAs with the consensus sequence 5'-GGUUCRA-3' (PubMed:25219674).</text>
</comment>
<comment type="catalytic activity">
    <reaction evidence="4">
        <text>uridine(55) in tRNA = pseudouridine(55) in tRNA</text>
        <dbReference type="Rhea" id="RHEA:42532"/>
        <dbReference type="Rhea" id="RHEA-COMP:10101"/>
        <dbReference type="Rhea" id="RHEA-COMP:10102"/>
        <dbReference type="ChEBI" id="CHEBI:65314"/>
        <dbReference type="ChEBI" id="CHEBI:65315"/>
        <dbReference type="EC" id="5.4.99.25"/>
    </reaction>
</comment>
<comment type="catalytic activity">
    <reaction evidence="3">
        <text>a uridine in mRNA = a pseudouridine in mRNA</text>
        <dbReference type="Rhea" id="RHEA:56644"/>
        <dbReference type="Rhea" id="RHEA-COMP:14658"/>
        <dbReference type="Rhea" id="RHEA-COMP:14659"/>
        <dbReference type="ChEBI" id="CHEBI:65314"/>
        <dbReference type="ChEBI" id="CHEBI:65315"/>
    </reaction>
</comment>
<comment type="subcellular location">
    <subcellularLocation>
        <location evidence="4">Nucleus</location>
    </subcellularLocation>
    <subcellularLocation>
        <location evidence="4">Mitochondrion</location>
    </subcellularLocation>
</comment>
<comment type="miscellaneous">
    <text evidence="2">Present with 3990 molecules/cell in log phase SD medium.</text>
</comment>
<comment type="similarity">
    <text evidence="5">Belongs to the pseudouridine synthase TruB family.</text>
</comment>
<dbReference type="EC" id="5.4.99.25" evidence="4"/>
<dbReference type="EMBL" id="U23084">
    <property type="protein sequence ID" value="AAC49108.1"/>
    <property type="molecule type" value="Genomic_DNA"/>
</dbReference>
<dbReference type="EMBL" id="Z71568">
    <property type="protein sequence ID" value="CAA96210.1"/>
    <property type="molecule type" value="Genomic_DNA"/>
</dbReference>
<dbReference type="EMBL" id="BK006947">
    <property type="protein sequence ID" value="DAA10267.1"/>
    <property type="molecule type" value="Genomic_DNA"/>
</dbReference>
<dbReference type="PIR" id="S60410">
    <property type="entry name" value="S60410"/>
</dbReference>
<dbReference type="RefSeq" id="NP_014107.1">
    <property type="nucleotide sequence ID" value="NM_001183130.1"/>
</dbReference>
<dbReference type="SMR" id="P48567"/>
<dbReference type="BioGRID" id="35545">
    <property type="interactions" value="84"/>
</dbReference>
<dbReference type="DIP" id="DIP-4256N"/>
<dbReference type="FunCoup" id="P48567">
    <property type="interactions" value="369"/>
</dbReference>
<dbReference type="IntAct" id="P48567">
    <property type="interactions" value="36"/>
</dbReference>
<dbReference type="MINT" id="P48567"/>
<dbReference type="STRING" id="4932.YNL292W"/>
<dbReference type="iPTMnet" id="P48567"/>
<dbReference type="PaxDb" id="4932-YNL292W"/>
<dbReference type="PeptideAtlas" id="P48567"/>
<dbReference type="EnsemblFungi" id="YNL292W_mRNA">
    <property type="protein sequence ID" value="YNL292W"/>
    <property type="gene ID" value="YNL292W"/>
</dbReference>
<dbReference type="GeneID" id="855424"/>
<dbReference type="KEGG" id="sce:YNL292W"/>
<dbReference type="AGR" id="SGD:S000005236"/>
<dbReference type="SGD" id="S000005236">
    <property type="gene designation" value="PUS4"/>
</dbReference>
<dbReference type="VEuPathDB" id="FungiDB:YNL292W"/>
<dbReference type="eggNOG" id="KOG2529">
    <property type="taxonomic scope" value="Eukaryota"/>
</dbReference>
<dbReference type="GeneTree" id="ENSGT00940000158962"/>
<dbReference type="HOGENOM" id="CLU_032087_4_2_1"/>
<dbReference type="InParanoid" id="P48567"/>
<dbReference type="OMA" id="FAINKPC"/>
<dbReference type="OrthoDB" id="9995526at2759"/>
<dbReference type="BioCyc" id="MetaCyc:YNL292W-MONOMER"/>
<dbReference type="BioCyc" id="YEAST:YNL292W-MONOMER"/>
<dbReference type="BRENDA" id="5.4.99.25">
    <property type="organism ID" value="984"/>
</dbReference>
<dbReference type="BRENDA" id="5.4.99.B22">
    <property type="organism ID" value="984"/>
</dbReference>
<dbReference type="BioGRID-ORCS" id="855424">
    <property type="hits" value="0 hits in 10 CRISPR screens"/>
</dbReference>
<dbReference type="PRO" id="PR:P48567"/>
<dbReference type="Proteomes" id="UP000002311">
    <property type="component" value="Chromosome XIV"/>
</dbReference>
<dbReference type="RNAct" id="P48567">
    <property type="molecule type" value="protein"/>
</dbReference>
<dbReference type="GO" id="GO:0005739">
    <property type="term" value="C:mitochondrion"/>
    <property type="evidence" value="ECO:0000315"/>
    <property type="project" value="SGD"/>
</dbReference>
<dbReference type="GO" id="GO:0005634">
    <property type="term" value="C:nucleus"/>
    <property type="evidence" value="ECO:0000315"/>
    <property type="project" value="SGD"/>
</dbReference>
<dbReference type="GO" id="GO:0009982">
    <property type="term" value="F:pseudouridine synthase activity"/>
    <property type="evidence" value="ECO:0000314"/>
    <property type="project" value="SGD"/>
</dbReference>
<dbReference type="GO" id="GO:0003723">
    <property type="term" value="F:RNA binding"/>
    <property type="evidence" value="ECO:0007669"/>
    <property type="project" value="InterPro"/>
</dbReference>
<dbReference type="GO" id="GO:0160148">
    <property type="term" value="F:tRNA pseudouridine(55) synthase activity"/>
    <property type="evidence" value="ECO:0007669"/>
    <property type="project" value="UniProtKB-EC"/>
</dbReference>
<dbReference type="GO" id="GO:1990481">
    <property type="term" value="P:mRNA pseudouridine synthesis"/>
    <property type="evidence" value="ECO:0000315"/>
    <property type="project" value="SGD"/>
</dbReference>
<dbReference type="GO" id="GO:0006400">
    <property type="term" value="P:tRNA modification"/>
    <property type="evidence" value="ECO:0000314"/>
    <property type="project" value="SGD"/>
</dbReference>
<dbReference type="CDD" id="cd02867">
    <property type="entry name" value="PseudoU_synth_TruB_4"/>
    <property type="match status" value="1"/>
</dbReference>
<dbReference type="Gene3D" id="3.30.2350.10">
    <property type="entry name" value="Pseudouridine synthase"/>
    <property type="match status" value="1"/>
</dbReference>
<dbReference type="HAMAP" id="MF_01080">
    <property type="entry name" value="TruB_bact"/>
    <property type="match status" value="1"/>
</dbReference>
<dbReference type="InterPro" id="IPR020103">
    <property type="entry name" value="PsdUridine_synth_cat_dom_sf"/>
</dbReference>
<dbReference type="InterPro" id="IPR002501">
    <property type="entry name" value="PsdUridine_synth_N"/>
</dbReference>
<dbReference type="InterPro" id="IPR014780">
    <property type="entry name" value="tRNA_psdUridine_synth_TruB"/>
</dbReference>
<dbReference type="PANTHER" id="PTHR13767:SF2">
    <property type="entry name" value="PSEUDOURIDYLATE SYNTHASE TRUB1"/>
    <property type="match status" value="1"/>
</dbReference>
<dbReference type="PANTHER" id="PTHR13767">
    <property type="entry name" value="TRNA-PSEUDOURIDINE SYNTHASE"/>
    <property type="match status" value="1"/>
</dbReference>
<dbReference type="Pfam" id="PF01509">
    <property type="entry name" value="TruB_N"/>
    <property type="match status" value="1"/>
</dbReference>
<dbReference type="SUPFAM" id="SSF55120">
    <property type="entry name" value="Pseudouridine synthase"/>
    <property type="match status" value="1"/>
</dbReference>
<reference key="1">
    <citation type="journal article" date="1995" name="Yeast">
        <title>Sequence analysis of a 30 kb DNA segment from yeast chromosome XIV carrying a ribosomal protein gene cluster, the genes encoding a plasma membrane protein and a subunit of replication factor C, and a novel putative serine/threonine protein kinase gene.</title>
        <authorList>
            <person name="Maurer K.C.T."/>
            <person name="Urbanus J.H.M."/>
            <person name="Planta R.J."/>
        </authorList>
    </citation>
    <scope>NUCLEOTIDE SEQUENCE [GENOMIC DNA]</scope>
    <source>
        <strain>ATCC 96604 / S288c / FY1679</strain>
    </source>
</reference>
<reference key="2">
    <citation type="journal article" date="1997" name="Nature">
        <title>The nucleotide sequence of Saccharomyces cerevisiae chromosome XIV and its evolutionary implications.</title>
        <authorList>
            <person name="Philippsen P."/>
            <person name="Kleine K."/>
            <person name="Poehlmann R."/>
            <person name="Duesterhoeft A."/>
            <person name="Hamberg K."/>
            <person name="Hegemann J.H."/>
            <person name="Obermaier B."/>
            <person name="Urrestarazu L.A."/>
            <person name="Aert R."/>
            <person name="Albermann K."/>
            <person name="Altmann R."/>
            <person name="Andre B."/>
            <person name="Baladron V."/>
            <person name="Ballesta J.P.G."/>
            <person name="Becam A.-M."/>
            <person name="Beinhauer J.D."/>
            <person name="Boskovic J."/>
            <person name="Buitrago M.J."/>
            <person name="Bussereau F."/>
            <person name="Coster F."/>
            <person name="Crouzet M."/>
            <person name="D'Angelo M."/>
            <person name="Dal Pero F."/>
            <person name="De Antoni A."/>
            <person name="del Rey F."/>
            <person name="Doignon F."/>
            <person name="Domdey H."/>
            <person name="Dubois E."/>
            <person name="Fiedler T.A."/>
            <person name="Fleig U."/>
            <person name="Floeth M."/>
            <person name="Fritz C."/>
            <person name="Gaillardin C."/>
            <person name="Garcia-Cantalejo J.M."/>
            <person name="Glansdorff N."/>
            <person name="Goffeau A."/>
            <person name="Gueldener U."/>
            <person name="Herbert C.J."/>
            <person name="Heumann K."/>
            <person name="Heuss-Neitzel D."/>
            <person name="Hilbert H."/>
            <person name="Hinni K."/>
            <person name="Iraqui Houssaini I."/>
            <person name="Jacquet M."/>
            <person name="Jimenez A."/>
            <person name="Jonniaux J.-L."/>
            <person name="Karpfinger-Hartl L."/>
            <person name="Lanfranchi G."/>
            <person name="Lepingle A."/>
            <person name="Levesque H."/>
            <person name="Lyck R."/>
            <person name="Maftahi M."/>
            <person name="Mallet L."/>
            <person name="Maurer C.T.C."/>
            <person name="Messenguy F."/>
            <person name="Mewes H.-W."/>
            <person name="Moestl D."/>
            <person name="Nasr F."/>
            <person name="Nicaud J.-M."/>
            <person name="Niedenthal R.K."/>
            <person name="Pandolfo D."/>
            <person name="Pierard A."/>
            <person name="Piravandi E."/>
            <person name="Planta R.J."/>
            <person name="Pohl T.M."/>
            <person name="Purnelle B."/>
            <person name="Rebischung C."/>
            <person name="Remacha M.A."/>
            <person name="Revuelta J.L."/>
            <person name="Rinke M."/>
            <person name="Saiz J.E."/>
            <person name="Sartorello F."/>
            <person name="Scherens B."/>
            <person name="Sen-Gupta M."/>
            <person name="Soler-Mira A."/>
            <person name="Urbanus J.H.M."/>
            <person name="Valle G."/>
            <person name="Van Dyck L."/>
            <person name="Verhasselt P."/>
            <person name="Vierendeels F."/>
            <person name="Vissers S."/>
            <person name="Voet M."/>
            <person name="Volckaert G."/>
            <person name="Wach A."/>
            <person name="Wambutt R."/>
            <person name="Wedler H."/>
            <person name="Zollner A."/>
            <person name="Hani J."/>
        </authorList>
    </citation>
    <scope>NUCLEOTIDE SEQUENCE [LARGE SCALE GENOMIC DNA]</scope>
    <source>
        <strain>ATCC 204508 / S288c</strain>
    </source>
</reference>
<reference key="3">
    <citation type="journal article" date="2014" name="G3 (Bethesda)">
        <title>The reference genome sequence of Saccharomyces cerevisiae: Then and now.</title>
        <authorList>
            <person name="Engel S.R."/>
            <person name="Dietrich F.S."/>
            <person name="Fisk D.G."/>
            <person name="Binkley G."/>
            <person name="Balakrishnan R."/>
            <person name="Costanzo M.C."/>
            <person name="Dwight S.S."/>
            <person name="Hitz B.C."/>
            <person name="Karra K."/>
            <person name="Nash R.S."/>
            <person name="Weng S."/>
            <person name="Wong E.D."/>
            <person name="Lloyd P."/>
            <person name="Skrzypek M.S."/>
            <person name="Miyasato S.R."/>
            <person name="Simison M."/>
            <person name="Cherry J.M."/>
        </authorList>
    </citation>
    <scope>GENOME REANNOTATION</scope>
    <source>
        <strain>ATCC 204508 / S288c</strain>
    </source>
</reference>
<reference key="4">
    <citation type="journal article" date="1997" name="Nucleic Acids Res.">
        <title>The yeast gene YNL292w encodes a pseudouridine synthase (Pus4) catalyzing the formation of psi55 in both mitochondrial and cytoplasmic tRNAs.</title>
        <authorList>
            <person name="Becker H.F."/>
            <person name="Motorin Y."/>
            <person name="Planta R.J."/>
            <person name="Grosjean H."/>
        </authorList>
    </citation>
    <scope>FUNCTION</scope>
    <scope>CATALYTIC ACTIVITY</scope>
    <scope>SUBSTRATE SPECIFICITY</scope>
</reference>
<reference key="5">
    <citation type="journal article" date="2003" name="Nature">
        <title>Global analysis of protein expression in yeast.</title>
        <authorList>
            <person name="Ghaemmaghami S."/>
            <person name="Huh W.-K."/>
            <person name="Bower K."/>
            <person name="Howson R.W."/>
            <person name="Belle A."/>
            <person name="Dephoure N."/>
            <person name="O'Shea E.K."/>
            <person name="Weissman J.S."/>
        </authorList>
    </citation>
    <scope>LEVEL OF PROTEIN EXPRESSION [LARGE SCALE ANALYSIS]</scope>
</reference>
<reference key="6">
    <citation type="journal article" date="2014" name="Cell">
        <title>Transcriptome-wide mapping reveals widespread dynamic-regulated pseudouridylation of ncRNA and mRNA.</title>
        <authorList>
            <person name="Schwartz S."/>
            <person name="Bernstein D.A."/>
            <person name="Mumbach M.R."/>
            <person name="Jovanovic M."/>
            <person name="Herbst R.H."/>
            <person name="Leon-Ricardo B.X."/>
            <person name="Engreitz J.M."/>
            <person name="Guttman M."/>
            <person name="Satija R."/>
            <person name="Lander E.S."/>
            <person name="Fink G."/>
            <person name="Regev A."/>
        </authorList>
    </citation>
    <scope>FUNCTION</scope>
    <scope>CATALYTIC ACTIVITY</scope>
</reference>
<accession>P48567</accession>
<accession>D6W0Q1</accession>
<gene>
    <name type="primary">PUS4</name>
    <name type="ordered locus">YNL292W</name>
    <name type="ORF">N0480</name>
</gene>
<evidence type="ECO:0000250" key="1">
    <source>
        <dbReference type="UniProtKB" id="P60340"/>
    </source>
</evidence>
<evidence type="ECO:0000269" key="2">
    <source>
    </source>
</evidence>
<evidence type="ECO:0000269" key="3">
    <source>
    </source>
</evidence>
<evidence type="ECO:0000269" key="4">
    <source>
    </source>
</evidence>
<evidence type="ECO:0000305" key="5"/>
<keyword id="KW-0413">Isomerase</keyword>
<keyword id="KW-0496">Mitochondrion</keyword>
<keyword id="KW-0539">Nucleus</keyword>
<keyword id="KW-1185">Reference proteome</keyword>
<keyword id="KW-0819">tRNA processing</keyword>
<proteinExistence type="evidence at protein level"/>
<protein>
    <recommendedName>
        <fullName>tRNA pseudouridine synthase 4</fullName>
        <ecNumber evidence="4">5.4.99.25</ecNumber>
    </recommendedName>
    <alternativeName>
        <fullName>tRNA pseudouridine(55) synthase</fullName>
        <shortName>Psi55 synthase</shortName>
    </alternativeName>
    <alternativeName>
        <fullName>tRNA pseudouridylate synthase 4</fullName>
    </alternativeName>
    <alternativeName>
        <fullName>tRNA-uridine isomerase 4</fullName>
    </alternativeName>
</protein>
<sequence length="403" mass="45273">MNGIFAIEKPSGITSNQFMLKLQHALTKSQVFSKEIQRATAERKQQYEKQTGKKASKRKLRKVSKVKMGHGGTLDPLASGVLVIGIGAGTKKLANYLSGTVKVYESEALFGVSTTSGDVEGEILSQNSVKHLNFDDLKTVEEKFVGQLKQTPPIYAALKMDGKPLHEYAREGKPLPRAIEPRQVTIYDLKVFSDSLKRDHDYPLLRPTTEEAVDTVKNLNANMLNDVLYFSKEYTEKHGLDSEVAKVEEPFPLSEQEEQEIQKEGDSYRAPKLHFKANVSSGTYIRSLVSDIGKSMRSSCYMVKLIRLQQQDWSLEKNNVFQLTDFTERDEKVWSKVLEKVLDEGATVDVIEELKKAEKEIPADVKECIVSSDQPGDEATAETIETANAEEHSNTLKRKIEQV</sequence>
<feature type="chain" id="PRO_0000121976" description="tRNA pseudouridine synthase 4">
    <location>
        <begin position="1"/>
        <end position="403"/>
    </location>
</feature>
<feature type="active site" description="Nucleophile" evidence="1">
    <location>
        <position position="75"/>
    </location>
</feature>
<organism>
    <name type="scientific">Saccharomyces cerevisiae (strain ATCC 204508 / S288c)</name>
    <name type="common">Baker's yeast</name>
    <dbReference type="NCBI Taxonomy" id="559292"/>
    <lineage>
        <taxon>Eukaryota</taxon>
        <taxon>Fungi</taxon>
        <taxon>Dikarya</taxon>
        <taxon>Ascomycota</taxon>
        <taxon>Saccharomycotina</taxon>
        <taxon>Saccharomycetes</taxon>
        <taxon>Saccharomycetales</taxon>
        <taxon>Saccharomycetaceae</taxon>
        <taxon>Saccharomyces</taxon>
    </lineage>
</organism>